<proteinExistence type="inferred from homology"/>
<name>CYSH_MYCBT</name>
<dbReference type="EC" id="1.8.4.10" evidence="1"/>
<dbReference type="EMBL" id="AP010918">
    <property type="protein sequence ID" value="BAH26684.1"/>
    <property type="molecule type" value="Genomic_DNA"/>
</dbReference>
<dbReference type="RefSeq" id="WP_003412303.1">
    <property type="nucleotide sequence ID" value="NZ_CP014566.1"/>
</dbReference>
<dbReference type="SMR" id="C1AQV5"/>
<dbReference type="KEGG" id="mbt:JTY_2400"/>
<dbReference type="HOGENOM" id="CLU_044089_2_0_11"/>
<dbReference type="GO" id="GO:0005737">
    <property type="term" value="C:cytoplasm"/>
    <property type="evidence" value="ECO:0007669"/>
    <property type="project" value="UniProtKB-SubCell"/>
</dbReference>
<dbReference type="GO" id="GO:0051539">
    <property type="term" value="F:4 iron, 4 sulfur cluster binding"/>
    <property type="evidence" value="ECO:0007669"/>
    <property type="project" value="UniProtKB-UniRule"/>
</dbReference>
<dbReference type="GO" id="GO:0043866">
    <property type="term" value="F:adenylyl-sulfate reductase (thioredoxin) activity"/>
    <property type="evidence" value="ECO:0007669"/>
    <property type="project" value="UniProtKB-EC"/>
</dbReference>
<dbReference type="GO" id="GO:0046872">
    <property type="term" value="F:metal ion binding"/>
    <property type="evidence" value="ECO:0007669"/>
    <property type="project" value="UniProtKB-KW"/>
</dbReference>
<dbReference type="GO" id="GO:0004604">
    <property type="term" value="F:phosphoadenylyl-sulfate reductase (thioredoxin) activity"/>
    <property type="evidence" value="ECO:0007669"/>
    <property type="project" value="UniProtKB-UniRule"/>
</dbReference>
<dbReference type="GO" id="GO:0019344">
    <property type="term" value="P:cysteine biosynthetic process"/>
    <property type="evidence" value="ECO:0007669"/>
    <property type="project" value="InterPro"/>
</dbReference>
<dbReference type="GO" id="GO:0070814">
    <property type="term" value="P:hydrogen sulfide biosynthetic process"/>
    <property type="evidence" value="ECO:0007669"/>
    <property type="project" value="UniProtKB-UniRule"/>
</dbReference>
<dbReference type="GO" id="GO:0019379">
    <property type="term" value="P:sulfate assimilation, phosphoadenylyl sulfate reduction by phosphoadenylyl-sulfate reductase (thioredoxin)"/>
    <property type="evidence" value="ECO:0007669"/>
    <property type="project" value="UniProtKB-UniRule"/>
</dbReference>
<dbReference type="CDD" id="cd23945">
    <property type="entry name" value="PAPS_reductase"/>
    <property type="match status" value="1"/>
</dbReference>
<dbReference type="FunFam" id="3.40.50.620:FF:000136">
    <property type="entry name" value="Probable phosphoadenosine phosphosulfate reductase"/>
    <property type="match status" value="1"/>
</dbReference>
<dbReference type="Gene3D" id="3.40.50.620">
    <property type="entry name" value="HUPs"/>
    <property type="match status" value="1"/>
</dbReference>
<dbReference type="HAMAP" id="MF_00063">
    <property type="entry name" value="CysH"/>
    <property type="match status" value="1"/>
</dbReference>
<dbReference type="InterPro" id="IPR011798">
    <property type="entry name" value="APS_reductase"/>
</dbReference>
<dbReference type="InterPro" id="IPR004511">
    <property type="entry name" value="PAPS/APS_Rdtase"/>
</dbReference>
<dbReference type="InterPro" id="IPR002500">
    <property type="entry name" value="PAPS_reduct_dom"/>
</dbReference>
<dbReference type="InterPro" id="IPR014729">
    <property type="entry name" value="Rossmann-like_a/b/a_fold"/>
</dbReference>
<dbReference type="NCBIfam" id="TIGR02055">
    <property type="entry name" value="APS_reductase"/>
    <property type="match status" value="1"/>
</dbReference>
<dbReference type="NCBIfam" id="TIGR00434">
    <property type="entry name" value="cysH"/>
    <property type="match status" value="1"/>
</dbReference>
<dbReference type="NCBIfam" id="NF002537">
    <property type="entry name" value="PRK02090.1"/>
    <property type="match status" value="1"/>
</dbReference>
<dbReference type="PANTHER" id="PTHR46509">
    <property type="entry name" value="PHOSPHOADENOSINE PHOSPHOSULFATE REDUCTASE"/>
    <property type="match status" value="1"/>
</dbReference>
<dbReference type="PANTHER" id="PTHR46509:SF1">
    <property type="entry name" value="PHOSPHOADENOSINE PHOSPHOSULFATE REDUCTASE"/>
    <property type="match status" value="1"/>
</dbReference>
<dbReference type="Pfam" id="PF01507">
    <property type="entry name" value="PAPS_reduct"/>
    <property type="match status" value="1"/>
</dbReference>
<dbReference type="PIRSF" id="PIRSF000857">
    <property type="entry name" value="PAPS_reductase"/>
    <property type="match status" value="1"/>
</dbReference>
<dbReference type="SUPFAM" id="SSF52402">
    <property type="entry name" value="Adenine nucleotide alpha hydrolases-like"/>
    <property type="match status" value="1"/>
</dbReference>
<accession>C1AQV5</accession>
<organism>
    <name type="scientific">Mycobacterium bovis (strain BCG / Tokyo 172 / ATCC 35737 / TMC 1019)</name>
    <dbReference type="NCBI Taxonomy" id="561275"/>
    <lineage>
        <taxon>Bacteria</taxon>
        <taxon>Bacillati</taxon>
        <taxon>Actinomycetota</taxon>
        <taxon>Actinomycetes</taxon>
        <taxon>Mycobacteriales</taxon>
        <taxon>Mycobacteriaceae</taxon>
        <taxon>Mycobacterium</taxon>
        <taxon>Mycobacterium tuberculosis complex</taxon>
    </lineage>
</organism>
<keyword id="KW-0963">Cytoplasm</keyword>
<keyword id="KW-0408">Iron</keyword>
<keyword id="KW-0411">Iron-sulfur</keyword>
<keyword id="KW-0479">Metal-binding</keyword>
<keyword id="KW-0560">Oxidoreductase</keyword>
<sequence>MSGETTRLTEPQLRELAARGAAELDGATATDMLRWTDETFGDIGGAGGGVSGHRGWTTCNYVVASNMADAVLVDLAAKVRPGVPVIFLDTGYHFVETIGTRDAIESVYDVRVLNVTPEHTVAEQDELLGKDLFARNPHECCRLRKVVPLGKTLRGYSAWVTGLRRVDAPTRANAPLVSFDETFKLVKVNPLAAWTDQDVQEYIADNDVLVNPLVREGYPSIGCAPCTAKPAEGADPRSGRWQGLAKTECGLHAS</sequence>
<gene>
    <name evidence="1" type="primary">cysH</name>
    <name type="ordered locus">JTY_2400</name>
</gene>
<comment type="function">
    <text evidence="1">Catalyzes the formation of sulfite from adenosine 5'-phosphosulfate (APS) using thioredoxin as an electron donor.</text>
</comment>
<comment type="catalytic activity">
    <reaction evidence="1">
        <text>[thioredoxin]-disulfide + sulfite + AMP + 2 H(+) = adenosine 5'-phosphosulfate + [thioredoxin]-dithiol</text>
        <dbReference type="Rhea" id="RHEA:21976"/>
        <dbReference type="Rhea" id="RHEA-COMP:10698"/>
        <dbReference type="Rhea" id="RHEA-COMP:10700"/>
        <dbReference type="ChEBI" id="CHEBI:15378"/>
        <dbReference type="ChEBI" id="CHEBI:17359"/>
        <dbReference type="ChEBI" id="CHEBI:29950"/>
        <dbReference type="ChEBI" id="CHEBI:50058"/>
        <dbReference type="ChEBI" id="CHEBI:58243"/>
        <dbReference type="ChEBI" id="CHEBI:456215"/>
        <dbReference type="EC" id="1.8.4.10"/>
    </reaction>
</comment>
<comment type="cofactor">
    <cofactor evidence="1">
        <name>[4Fe-4S] cluster</name>
        <dbReference type="ChEBI" id="CHEBI:49883"/>
    </cofactor>
    <text evidence="1">Binds 1 [4Fe-4S] cluster per subunit.</text>
</comment>
<comment type="pathway">
    <text evidence="1">Sulfur metabolism; hydrogen sulfide biosynthesis; sulfite from sulfate.</text>
</comment>
<comment type="subcellular location">
    <subcellularLocation>
        <location evidence="1">Cytoplasm</location>
    </subcellularLocation>
</comment>
<comment type="similarity">
    <text evidence="1">Belongs to the PAPS reductase family. CysH subfamily.</text>
</comment>
<protein>
    <recommendedName>
        <fullName evidence="1">Adenosine 5'-phosphosulfate reductase</fullName>
        <shortName evidence="1">APS reductase</shortName>
        <ecNumber evidence="1">1.8.4.10</ecNumber>
    </recommendedName>
    <alternativeName>
        <fullName evidence="1">5'-adenylylsulfate reductase</fullName>
    </alternativeName>
    <alternativeName>
        <fullName evidence="1">Thioredoxin-dependent 5'-adenylylsulfate reductase</fullName>
    </alternativeName>
</protein>
<evidence type="ECO:0000255" key="1">
    <source>
        <dbReference type="HAMAP-Rule" id="MF_00063"/>
    </source>
</evidence>
<feature type="chain" id="PRO_1000117930" description="Adenosine 5'-phosphosulfate reductase">
    <location>
        <begin position="1"/>
        <end position="254"/>
    </location>
</feature>
<feature type="active site" description="Nucleophile; cysteine thiosulfonate intermediate" evidence="1">
    <location>
        <position position="249"/>
    </location>
</feature>
<feature type="binding site" evidence="1">
    <location>
        <position position="140"/>
    </location>
    <ligand>
        <name>[4Fe-4S] cluster</name>
        <dbReference type="ChEBI" id="CHEBI:49883"/>
    </ligand>
</feature>
<feature type="binding site" evidence="1">
    <location>
        <position position="141"/>
    </location>
    <ligand>
        <name>[4Fe-4S] cluster</name>
        <dbReference type="ChEBI" id="CHEBI:49883"/>
    </ligand>
</feature>
<feature type="binding site" evidence="1">
    <location>
        <position position="223"/>
    </location>
    <ligand>
        <name>[4Fe-4S] cluster</name>
        <dbReference type="ChEBI" id="CHEBI:49883"/>
    </ligand>
</feature>
<feature type="binding site" evidence="1">
    <location>
        <position position="226"/>
    </location>
    <ligand>
        <name>[4Fe-4S] cluster</name>
        <dbReference type="ChEBI" id="CHEBI:49883"/>
    </ligand>
</feature>
<reference key="1">
    <citation type="journal article" date="2009" name="Vaccine">
        <title>Whole genome sequence analysis of Mycobacterium bovis bacillus Calmette-Guerin (BCG) Tokyo 172: a comparative study of BCG vaccine substrains.</title>
        <authorList>
            <person name="Seki M."/>
            <person name="Honda I."/>
            <person name="Fujita I."/>
            <person name="Yano I."/>
            <person name="Yamamoto S."/>
            <person name="Koyama A."/>
        </authorList>
    </citation>
    <scope>NUCLEOTIDE SEQUENCE [LARGE SCALE GENOMIC DNA]</scope>
    <source>
        <strain>BCG / Tokyo 172 / ATCC 35737 / TMC 1019</strain>
    </source>
</reference>